<keyword id="KW-0067">ATP-binding</keyword>
<keyword id="KW-0963">Cytoplasm</keyword>
<keyword id="KW-1017">Isopeptide bond</keyword>
<keyword id="KW-0436">Ligase</keyword>
<keyword id="KW-0460">Magnesium</keyword>
<keyword id="KW-0479">Metal-binding</keyword>
<keyword id="KW-0547">Nucleotide-binding</keyword>
<keyword id="KW-1185">Reference proteome</keyword>
<keyword id="KW-0832">Ubl conjugation</keyword>
<dbReference type="EC" id="6.3.1.2" evidence="2"/>
<dbReference type="EMBL" id="AL123456">
    <property type="protein sequence ID" value="CCP45000.1"/>
    <property type="molecule type" value="Genomic_DNA"/>
</dbReference>
<dbReference type="PIR" id="B70776">
    <property type="entry name" value="B70776"/>
</dbReference>
<dbReference type="RefSeq" id="NP_216738.1">
    <property type="nucleotide sequence ID" value="NC_000962.3"/>
</dbReference>
<dbReference type="RefSeq" id="WP_003411482.1">
    <property type="nucleotide sequence ID" value="NZ_NVQJ01000008.1"/>
</dbReference>
<dbReference type="SMR" id="P9WN37"/>
<dbReference type="FunCoup" id="P9WN37">
    <property type="interactions" value="289"/>
</dbReference>
<dbReference type="IntAct" id="P9WN37">
    <property type="interactions" value="11"/>
</dbReference>
<dbReference type="MINT" id="P9WN37"/>
<dbReference type="STRING" id="83332.Rv2222c"/>
<dbReference type="PaxDb" id="83332-Rv2222c"/>
<dbReference type="DNASU" id="888238"/>
<dbReference type="GeneID" id="888238"/>
<dbReference type="KEGG" id="mtu:Rv2222c"/>
<dbReference type="KEGG" id="mtv:RVBD_2222c"/>
<dbReference type="TubercuList" id="Rv2222c"/>
<dbReference type="eggNOG" id="COG0174">
    <property type="taxonomic scope" value="Bacteria"/>
</dbReference>
<dbReference type="InParanoid" id="P9WN37"/>
<dbReference type="OrthoDB" id="9807095at2"/>
<dbReference type="PhylomeDB" id="P9WN37"/>
<dbReference type="Proteomes" id="UP000001584">
    <property type="component" value="Chromosome"/>
</dbReference>
<dbReference type="GO" id="GO:0005737">
    <property type="term" value="C:cytoplasm"/>
    <property type="evidence" value="ECO:0007669"/>
    <property type="project" value="UniProtKB-SubCell"/>
</dbReference>
<dbReference type="GO" id="GO:0005886">
    <property type="term" value="C:plasma membrane"/>
    <property type="evidence" value="ECO:0007005"/>
    <property type="project" value="MTBBASE"/>
</dbReference>
<dbReference type="GO" id="GO:0005524">
    <property type="term" value="F:ATP binding"/>
    <property type="evidence" value="ECO:0007669"/>
    <property type="project" value="UniProtKB-KW"/>
</dbReference>
<dbReference type="GO" id="GO:0050001">
    <property type="term" value="F:D-glutaminase activity"/>
    <property type="evidence" value="ECO:0000314"/>
    <property type="project" value="MTBBASE"/>
</dbReference>
<dbReference type="GO" id="GO:0004356">
    <property type="term" value="F:glutamine synthetase activity"/>
    <property type="evidence" value="ECO:0007669"/>
    <property type="project" value="UniProtKB-EC"/>
</dbReference>
<dbReference type="GO" id="GO:0046872">
    <property type="term" value="F:metal ion binding"/>
    <property type="evidence" value="ECO:0007669"/>
    <property type="project" value="UniProtKB-KW"/>
</dbReference>
<dbReference type="GO" id="GO:0006542">
    <property type="term" value="P:glutamine biosynthetic process"/>
    <property type="evidence" value="ECO:0000318"/>
    <property type="project" value="GO_Central"/>
</dbReference>
<dbReference type="FunFam" id="3.30.590.10:FF:000003">
    <property type="entry name" value="Glutamine synthetase 2"/>
    <property type="match status" value="1"/>
</dbReference>
<dbReference type="FunFam" id="3.10.20.70:FF:000002">
    <property type="entry name" value="Glutamine synthetase I"/>
    <property type="match status" value="1"/>
</dbReference>
<dbReference type="Gene3D" id="3.10.20.70">
    <property type="entry name" value="Glutamine synthetase, N-terminal domain"/>
    <property type="match status" value="1"/>
</dbReference>
<dbReference type="Gene3D" id="3.30.590.10">
    <property type="entry name" value="Glutamine synthetase/guanido kinase, catalytic domain"/>
    <property type="match status" value="1"/>
</dbReference>
<dbReference type="InterPro" id="IPR008147">
    <property type="entry name" value="Gln_synt_N"/>
</dbReference>
<dbReference type="InterPro" id="IPR036651">
    <property type="entry name" value="Gln_synt_N_sf"/>
</dbReference>
<dbReference type="InterPro" id="IPR014746">
    <property type="entry name" value="Gln_synth/guanido_kin_cat_dom"/>
</dbReference>
<dbReference type="InterPro" id="IPR008146">
    <property type="entry name" value="Gln_synth_cat_dom"/>
</dbReference>
<dbReference type="InterPro" id="IPR027303">
    <property type="entry name" value="Gln_synth_gly_rich_site"/>
</dbReference>
<dbReference type="PANTHER" id="PTHR43785:SF11">
    <property type="entry name" value="GAMMA-GLUTAMYLPOLYAMINE SYNTHETASE GLNA2"/>
    <property type="match status" value="1"/>
</dbReference>
<dbReference type="PANTHER" id="PTHR43785">
    <property type="entry name" value="GAMMA-GLUTAMYLPUTRESCINE SYNTHETASE"/>
    <property type="match status" value="1"/>
</dbReference>
<dbReference type="Pfam" id="PF00120">
    <property type="entry name" value="Gln-synt_C"/>
    <property type="match status" value="1"/>
</dbReference>
<dbReference type="Pfam" id="PF03951">
    <property type="entry name" value="Gln-synt_N"/>
    <property type="match status" value="1"/>
</dbReference>
<dbReference type="SMART" id="SM01230">
    <property type="entry name" value="Gln-synt_C"/>
    <property type="match status" value="1"/>
</dbReference>
<dbReference type="SUPFAM" id="SSF54368">
    <property type="entry name" value="Glutamine synthetase, N-terminal domain"/>
    <property type="match status" value="1"/>
</dbReference>
<dbReference type="SUPFAM" id="SSF55931">
    <property type="entry name" value="Glutamine synthetase/guanido kinase"/>
    <property type="match status" value="1"/>
</dbReference>
<dbReference type="PROSITE" id="PS00181">
    <property type="entry name" value="GLNA_ATP"/>
    <property type="match status" value="1"/>
</dbReference>
<dbReference type="PROSITE" id="PS51986">
    <property type="entry name" value="GS_BETA_GRASP"/>
    <property type="match status" value="1"/>
</dbReference>
<dbReference type="PROSITE" id="PS51987">
    <property type="entry name" value="GS_CATALYTIC"/>
    <property type="match status" value="1"/>
</dbReference>
<comment type="function">
    <text evidence="2">Glutamine synthetase (GS) is an unusual multitasking protein that functions as an enzyme, a transcription coregulator, and a chaperone in ammonium assimilation and in the regulation of genes involved in nitrogen metabolism. It catalyzes the ATP-dependent biosynthesis of glutamine from glutamate and ammonia. Feedback-inhibited GlnA also interacts with and regulates the activity of the transcriptional regulator TnrA. During nitrogen limitation, TnrA is in its DNA-binding active state and turns on the transcription of genes required for nitrogen assimilation. Under conditions of nitrogen excess, feedback-inhibited GlnA forms a stable complex with TnrA, which inhibits its DNA-binding activity. In contrast, feedback-inhibited GlnA acts as a chaperone to stabilize the DNA-binding activity of GlnR, which represses the transcription of nitrogen assimilation genes.</text>
</comment>
<comment type="catalytic activity">
    <reaction evidence="2">
        <text>L-glutamate + NH4(+) + ATP = L-glutamine + ADP + phosphate + H(+)</text>
        <dbReference type="Rhea" id="RHEA:16169"/>
        <dbReference type="ChEBI" id="CHEBI:15378"/>
        <dbReference type="ChEBI" id="CHEBI:28938"/>
        <dbReference type="ChEBI" id="CHEBI:29985"/>
        <dbReference type="ChEBI" id="CHEBI:30616"/>
        <dbReference type="ChEBI" id="CHEBI:43474"/>
        <dbReference type="ChEBI" id="CHEBI:58359"/>
        <dbReference type="ChEBI" id="CHEBI:456216"/>
        <dbReference type="EC" id="6.3.1.2"/>
    </reaction>
</comment>
<comment type="cofactor">
    <cofactor evidence="2">
        <name>Mg(2+)</name>
        <dbReference type="ChEBI" id="CHEBI:18420"/>
    </cofactor>
    <text evidence="2">Binds 2 Mg(2+) ions per subunit.</text>
</comment>
<comment type="activity regulation">
    <text evidence="2">Inhibited by glutamine.</text>
</comment>
<comment type="subunit">
    <text evidence="2">Oligomer of 12 subunits arranged in the form of two hexagons. In its feedback-inhibited form, interacts with TnrA in order to block its DNA-binding activity.</text>
</comment>
<comment type="subcellular location">
    <subcellularLocation>
        <location evidence="2">Cytoplasm</location>
    </subcellularLocation>
</comment>
<comment type="similarity">
    <text evidence="8">Belongs to the glutamine synthetase family.</text>
</comment>
<name>GLN1A_MYCTU</name>
<sequence length="446" mass="49608">MDRQKEFVLRTLEERDIRFVRLWFTDVLGFLKSVAIAPAELEGAFEEGIGFDGSSIEGFARVSESDTVAHPDPSTFQVLPWATSSGHHHSARMFCDITMPDGSPSWADPRHVLRRQLTKAGELGFSCYVHPEIEFFLLKPGPEDGSVPVPVDNAGYFDQAVHDSALNFRRHAIDALEFMGISVEFSHHEGAPGQQEIDLRFADALSMADNVMTFRYVIKEVALEEGARASFMPKPFGQHPGSAMHTHMSLFEGDVNAFHSADDPLQLSEVGKSFIAGILEHACEISAVTNQWVNSYKRLVQGGEAPTAASWGAANRSALVRVPMYTPHKTSSRRVEVRSPDSACNPYLTFAVLLAAGLRGVEKGYVLGPQAEDNVWDLTPEERRAMGYRELPSSLDSALRAMEASELVAEALGEHVFDFFLRNKRTEWANYRSHVTPYELRTYLSL</sequence>
<organism>
    <name type="scientific">Mycobacterium tuberculosis (strain ATCC 25618 / H37Rv)</name>
    <dbReference type="NCBI Taxonomy" id="83332"/>
    <lineage>
        <taxon>Bacteria</taxon>
        <taxon>Bacillati</taxon>
        <taxon>Actinomycetota</taxon>
        <taxon>Actinomycetes</taxon>
        <taxon>Mycobacteriales</taxon>
        <taxon>Mycobacteriaceae</taxon>
        <taxon>Mycobacterium</taxon>
        <taxon>Mycobacterium tuberculosis complex</taxon>
    </lineage>
</organism>
<proteinExistence type="evidence at protein level"/>
<feature type="chain" id="PRO_0000153247" description="Glutamine synthetase">
    <location>
        <begin position="1"/>
        <end position="446"/>
    </location>
</feature>
<feature type="domain" description="GS beta-grasp" evidence="5">
    <location>
        <begin position="15"/>
        <end position="102"/>
    </location>
</feature>
<feature type="domain" description="GS catalytic" evidence="6">
    <location>
        <begin position="109"/>
        <end position="446"/>
    </location>
</feature>
<feature type="binding site" evidence="2">
    <location>
        <position position="132"/>
    </location>
    <ligand>
        <name>Mg(2+)</name>
        <dbReference type="ChEBI" id="CHEBI:18420"/>
        <label>1</label>
    </ligand>
</feature>
<feature type="binding site" evidence="2">
    <location>
        <position position="134"/>
    </location>
    <ligand>
        <name>Mg(2+)</name>
        <dbReference type="ChEBI" id="CHEBI:18420"/>
        <label>2</label>
    </ligand>
</feature>
<feature type="binding site" evidence="4">
    <location>
        <position position="184"/>
    </location>
    <ligand>
        <name>ATP</name>
        <dbReference type="ChEBI" id="CHEBI:30616"/>
    </ligand>
</feature>
<feature type="binding site" evidence="2">
    <location>
        <position position="189"/>
    </location>
    <ligand>
        <name>Mg(2+)</name>
        <dbReference type="ChEBI" id="CHEBI:18420"/>
        <label>2</label>
    </ligand>
</feature>
<feature type="binding site" evidence="2">
    <location>
        <position position="196"/>
    </location>
    <ligand>
        <name>Mg(2+)</name>
        <dbReference type="ChEBI" id="CHEBI:18420"/>
        <label>2</label>
    </ligand>
</feature>
<feature type="binding site" evidence="2">
    <location>
        <position position="241"/>
    </location>
    <ligand>
        <name>L-glutamate</name>
        <dbReference type="ChEBI" id="CHEBI:29985"/>
    </ligand>
</feature>
<feature type="binding site" evidence="2">
    <location>
        <position position="245"/>
    </location>
    <ligand>
        <name>Mg(2+)</name>
        <dbReference type="ChEBI" id="CHEBI:18420"/>
        <label>1</label>
    </ligand>
</feature>
<feature type="binding site" evidence="4">
    <location>
        <begin position="247"/>
        <end position="249"/>
    </location>
    <ligand>
        <name>ATP</name>
        <dbReference type="ChEBI" id="CHEBI:30616"/>
    </ligand>
</feature>
<feature type="binding site" evidence="3">
    <location>
        <position position="249"/>
    </location>
    <ligand>
        <name>ATP</name>
        <dbReference type="ChEBI" id="CHEBI:30616"/>
    </ligand>
</feature>
<feature type="binding site" evidence="1">
    <location>
        <position position="298"/>
    </location>
    <ligand>
        <name>L-glutamate</name>
        <dbReference type="ChEBI" id="CHEBI:29985"/>
    </ligand>
</feature>
<feature type="binding site" evidence="1">
    <location>
        <position position="304"/>
    </location>
    <ligand>
        <name>L-glutamate</name>
        <dbReference type="ChEBI" id="CHEBI:29985"/>
    </ligand>
</feature>
<feature type="binding site" evidence="4">
    <location>
        <position position="316"/>
    </location>
    <ligand>
        <name>ATP</name>
        <dbReference type="ChEBI" id="CHEBI:30616"/>
    </ligand>
</feature>
<feature type="binding site" evidence="4">
    <location>
        <position position="316"/>
    </location>
    <ligand>
        <name>L-glutamate</name>
        <dbReference type="ChEBI" id="CHEBI:29985"/>
    </ligand>
</feature>
<feature type="binding site" evidence="4">
    <location>
        <position position="321"/>
    </location>
    <ligand>
        <name>ATP</name>
        <dbReference type="ChEBI" id="CHEBI:30616"/>
    </ligand>
</feature>
<feature type="binding site" evidence="2">
    <location>
        <position position="336"/>
    </location>
    <ligand>
        <name>Mg(2+)</name>
        <dbReference type="ChEBI" id="CHEBI:18420"/>
        <label>1</label>
    </ligand>
</feature>
<feature type="binding site" evidence="1">
    <location>
        <position position="338"/>
    </location>
    <ligand>
        <name>L-glutamate</name>
        <dbReference type="ChEBI" id="CHEBI:29985"/>
    </ligand>
</feature>
<feature type="site" description="Important for inhibition by glutamine" evidence="2">
    <location>
        <position position="61"/>
    </location>
</feature>
<feature type="cross-link" description="Isoglutamyl lysine isopeptide (Lys-Gln) (interchain with Q-Cter in protein Pup)" evidence="7">
    <location>
        <position position="363"/>
    </location>
</feature>
<evidence type="ECO:0000250" key="1">
    <source>
        <dbReference type="UniProtKB" id="P0A1P6"/>
    </source>
</evidence>
<evidence type="ECO:0000250" key="2">
    <source>
        <dbReference type="UniProtKB" id="P12425"/>
    </source>
</evidence>
<evidence type="ECO:0000250" key="3">
    <source>
        <dbReference type="UniProtKB" id="P77961"/>
    </source>
</evidence>
<evidence type="ECO:0000250" key="4">
    <source>
        <dbReference type="UniProtKB" id="P9WN39"/>
    </source>
</evidence>
<evidence type="ECO:0000255" key="5">
    <source>
        <dbReference type="PROSITE-ProRule" id="PRU01330"/>
    </source>
</evidence>
<evidence type="ECO:0000255" key="6">
    <source>
        <dbReference type="PROSITE-ProRule" id="PRU01331"/>
    </source>
</evidence>
<evidence type="ECO:0000269" key="7">
    <source>
    </source>
</evidence>
<evidence type="ECO:0000305" key="8"/>
<accession>P9WN37</accession>
<accession>L0T968</accession>
<accession>P64245</accession>
<accession>Q10378</accession>
<reference key="1">
    <citation type="journal article" date="1998" name="Nature">
        <title>Deciphering the biology of Mycobacterium tuberculosis from the complete genome sequence.</title>
        <authorList>
            <person name="Cole S.T."/>
            <person name="Brosch R."/>
            <person name="Parkhill J."/>
            <person name="Garnier T."/>
            <person name="Churcher C.M."/>
            <person name="Harris D.E."/>
            <person name="Gordon S.V."/>
            <person name="Eiglmeier K."/>
            <person name="Gas S."/>
            <person name="Barry C.E. III"/>
            <person name="Tekaia F."/>
            <person name="Badcock K."/>
            <person name="Basham D."/>
            <person name="Brown D."/>
            <person name="Chillingworth T."/>
            <person name="Connor R."/>
            <person name="Davies R.M."/>
            <person name="Devlin K."/>
            <person name="Feltwell T."/>
            <person name="Gentles S."/>
            <person name="Hamlin N."/>
            <person name="Holroyd S."/>
            <person name="Hornsby T."/>
            <person name="Jagels K."/>
            <person name="Krogh A."/>
            <person name="McLean J."/>
            <person name="Moule S."/>
            <person name="Murphy L.D."/>
            <person name="Oliver S."/>
            <person name="Osborne J."/>
            <person name="Quail M.A."/>
            <person name="Rajandream M.A."/>
            <person name="Rogers J."/>
            <person name="Rutter S."/>
            <person name="Seeger K."/>
            <person name="Skelton S."/>
            <person name="Squares S."/>
            <person name="Squares R."/>
            <person name="Sulston J.E."/>
            <person name="Taylor K."/>
            <person name="Whitehead S."/>
            <person name="Barrell B.G."/>
        </authorList>
    </citation>
    <scope>NUCLEOTIDE SEQUENCE [LARGE SCALE GENOMIC DNA]</scope>
    <source>
        <strain>ATCC 25618 / H37Rv</strain>
    </source>
</reference>
<reference key="2">
    <citation type="journal article" date="2010" name="PLoS ONE">
        <title>Prokaryotic ubiquitin-like protein (Pup) proteome of Mycobacterium tuberculosis.</title>
        <authorList>
            <person name="Festa R.A."/>
            <person name="McAllister F."/>
            <person name="Pearce M.J."/>
            <person name="Mintseris J."/>
            <person name="Burns K.E."/>
            <person name="Gygi S.P."/>
            <person name="Darwin K.H."/>
        </authorList>
    </citation>
    <scope>PUPYLATION AT LYS-363</scope>
    <scope>IDENTIFICATION BY MASS SPECTROMETRY</scope>
    <source>
        <strain>ATCC 25618 / H37Rv</strain>
    </source>
</reference>
<reference key="3">
    <citation type="journal article" date="2011" name="Mol. Cell. Proteomics">
        <title>Proteogenomic analysis of Mycobacterium tuberculosis by high resolution mass spectrometry.</title>
        <authorList>
            <person name="Kelkar D.S."/>
            <person name="Kumar D."/>
            <person name="Kumar P."/>
            <person name="Balakrishnan L."/>
            <person name="Muthusamy B."/>
            <person name="Yadav A.K."/>
            <person name="Shrivastava P."/>
            <person name="Marimuthu A."/>
            <person name="Anand S."/>
            <person name="Sundaram H."/>
            <person name="Kingsbury R."/>
            <person name="Harsha H.C."/>
            <person name="Nair B."/>
            <person name="Prasad T.S."/>
            <person name="Chauhan D.S."/>
            <person name="Katoch K."/>
            <person name="Katoch V.M."/>
            <person name="Kumar P."/>
            <person name="Chaerkady R."/>
            <person name="Ramachandran S."/>
            <person name="Dash D."/>
            <person name="Pandey A."/>
        </authorList>
    </citation>
    <scope>IDENTIFICATION BY MASS SPECTROMETRY [LARGE SCALE ANALYSIS]</scope>
    <source>
        <strain>ATCC 25618 / H37Rv</strain>
    </source>
</reference>
<gene>
    <name evidence="2" type="primary">glnA2</name>
    <name type="ordered locus">Rv2222c</name>
    <name type="ORF">MTCY190.33c</name>
    <name type="ORF">MTCY427.03c</name>
</gene>
<protein>
    <recommendedName>
        <fullName evidence="2">Glutamine synthetase</fullName>
        <shortName evidence="2">GS</shortName>
        <ecNumber evidence="2">6.3.1.2</ecNumber>
    </recommendedName>
    <alternativeName>
        <fullName evidence="2">Glutamate--ammonia ligase</fullName>
    </alternativeName>
    <alternativeName>
        <fullName evidence="2">Glutamine synthetase I alpha</fullName>
        <shortName evidence="2">GSI alpha</shortName>
    </alternativeName>
</protein>